<organism>
    <name type="scientific">Homo sapiens</name>
    <name type="common">Human</name>
    <dbReference type="NCBI Taxonomy" id="9606"/>
    <lineage>
        <taxon>Eukaryota</taxon>
        <taxon>Metazoa</taxon>
        <taxon>Chordata</taxon>
        <taxon>Craniata</taxon>
        <taxon>Vertebrata</taxon>
        <taxon>Euteleostomi</taxon>
        <taxon>Mammalia</taxon>
        <taxon>Eutheria</taxon>
        <taxon>Euarchontoglires</taxon>
        <taxon>Primates</taxon>
        <taxon>Haplorrhini</taxon>
        <taxon>Catarrhini</taxon>
        <taxon>Hominidae</taxon>
        <taxon>Homo</taxon>
    </lineage>
</organism>
<feature type="chain" id="PRO_0000213854" description="Sorting nexin-10">
    <location>
        <begin position="1"/>
        <end position="201"/>
    </location>
</feature>
<feature type="domain" description="PX" evidence="1">
    <location>
        <begin position="10"/>
        <end position="127"/>
    </location>
</feature>
<feature type="region of interest" description="Required for interaction with ATP6V1D" evidence="5">
    <location>
        <begin position="8"/>
        <end position="125"/>
    </location>
</feature>
<feature type="region of interest" description="Disordered" evidence="2">
    <location>
        <begin position="156"/>
        <end position="201"/>
    </location>
</feature>
<feature type="binding site" evidence="10">
    <location>
        <position position="53"/>
    </location>
    <ligand>
        <name>a 1,2-diacyl-sn-glycero-3-phospho-(1D-myo-inositol-3-phosphate)</name>
        <dbReference type="ChEBI" id="CHEBI:58088"/>
    </ligand>
</feature>
<feature type="binding site" evidence="10">
    <location>
        <position position="79"/>
    </location>
    <ligand>
        <name>a 1,2-diacyl-sn-glycero-3-phospho-(1D-myo-inositol-3-phosphate)</name>
        <dbReference type="ChEBI" id="CHEBI:58088"/>
    </ligand>
</feature>
<feature type="binding site" evidence="10">
    <location>
        <position position="94"/>
    </location>
    <ligand>
        <name>a 1,2-diacyl-sn-glycero-3-phospho-(1D-myo-inositol-3-phosphate)</name>
        <dbReference type="ChEBI" id="CHEBI:58088"/>
    </ligand>
</feature>
<feature type="splice variant" id="VSP_045920" description="In isoform 2." evidence="9">
    <location>
        <begin position="1"/>
        <end position="84"/>
    </location>
</feature>
<feature type="sequence variant" id="VAR_069299" description="In OPTB8; dbSNP:rs779298714." evidence="8">
    <original>R</original>
    <variation>L</variation>
    <location>
        <position position="16"/>
    </location>
</feature>
<feature type="sequence variant" id="VAR_069300" description="In OPTB8; dbSNP:rs771038257." evidence="8">
    <original>Y</original>
    <variation>S</variation>
    <location>
        <position position="32"/>
    </location>
</feature>
<feature type="sequence variant" id="VAR_069301" description="In OPTB8." evidence="8">
    <original>R</original>
    <variation>P</variation>
    <location>
        <position position="51"/>
    </location>
</feature>
<feature type="sequence variant" id="VAR_069302" description="In OPTB8; increased expression, produces extensive cytoplasmic vacuolation and impairs bone resorptive function; dbSNP:rs398123011." evidence="6">
    <original>R</original>
    <variation>Q</variation>
    <location>
        <position position="51"/>
    </location>
</feature>
<feature type="sequence variant" id="VAR_046098" description="In dbSNP:rs1053042." evidence="3">
    <original>S</original>
    <variation>I</variation>
    <location>
        <position position="187"/>
    </location>
</feature>
<feature type="mutagenesis site" description="Abolishes vacuolization induced by overexpression." evidence="4">
    <original>R</original>
    <variation>A</variation>
    <location>
        <position position="53"/>
    </location>
</feature>
<feature type="mutagenesis site" description="Slightly reduced vacuolization induced by overexpression." evidence="4">
    <original>K</original>
    <variation>A</variation>
    <location>
        <position position="79"/>
    </location>
</feature>
<feature type="mutagenesis site" description="Reduced vacuolization induced by overexpression." evidence="4">
    <original>R</original>
    <variation>A</variation>
    <location>
        <position position="94"/>
    </location>
</feature>
<feature type="strand" evidence="11">
    <location>
        <begin position="11"/>
        <end position="22"/>
    </location>
</feature>
<feature type="strand" evidence="12">
    <location>
        <begin position="25"/>
        <end position="27"/>
    </location>
</feature>
<feature type="strand" evidence="11">
    <location>
        <begin position="29"/>
        <end position="38"/>
    </location>
</feature>
<feature type="strand" evidence="11">
    <location>
        <begin position="46"/>
        <end position="52"/>
    </location>
</feature>
<feature type="helix" evidence="11">
    <location>
        <begin position="54"/>
        <end position="67"/>
    </location>
</feature>
<feature type="helix" evidence="11">
    <location>
        <begin position="80"/>
        <end position="82"/>
    </location>
</feature>
<feature type="helix" evidence="11">
    <location>
        <begin position="88"/>
        <end position="106"/>
    </location>
</feature>
<feature type="helix" evidence="11">
    <location>
        <begin position="109"/>
        <end position="112"/>
    </location>
</feature>
<feature type="helix" evidence="11">
    <location>
        <begin position="115"/>
        <end position="122"/>
    </location>
</feature>
<feature type="helix" evidence="11">
    <location>
        <begin position="127"/>
        <end position="134"/>
    </location>
</feature>
<feature type="strand" evidence="13">
    <location>
        <begin position="138"/>
        <end position="140"/>
    </location>
</feature>
<feature type="helix" evidence="13">
    <location>
        <begin position="142"/>
        <end position="153"/>
    </location>
</feature>
<evidence type="ECO:0000255" key="1">
    <source>
        <dbReference type="PROSITE-ProRule" id="PRU00147"/>
    </source>
</evidence>
<evidence type="ECO:0000256" key="2">
    <source>
        <dbReference type="SAM" id="MobiDB-lite"/>
    </source>
</evidence>
<evidence type="ECO:0000269" key="3">
    <source>
    </source>
</evidence>
<evidence type="ECO:0000269" key="4">
    <source>
    </source>
</evidence>
<evidence type="ECO:0000269" key="5">
    <source>
    </source>
</evidence>
<evidence type="ECO:0000269" key="6">
    <source>
    </source>
</evidence>
<evidence type="ECO:0000269" key="7">
    <source>
    </source>
</evidence>
<evidence type="ECO:0000269" key="8">
    <source>
    </source>
</evidence>
<evidence type="ECO:0000303" key="9">
    <source>
    </source>
</evidence>
<evidence type="ECO:0000305" key="10"/>
<evidence type="ECO:0007829" key="11">
    <source>
        <dbReference type="PDB" id="4ON3"/>
    </source>
</evidence>
<evidence type="ECO:0007829" key="12">
    <source>
        <dbReference type="PDB" id="4PZG"/>
    </source>
</evidence>
<evidence type="ECO:0007829" key="13">
    <source>
        <dbReference type="PDB" id="6KOK"/>
    </source>
</evidence>
<proteinExistence type="evidence at protein level"/>
<comment type="function">
    <text evidence="4 5 6">Probable phosphoinositide-binding protein involved in protein sorting and membrane trafficking in endosomes. Plays a role in cilium biogenesis through regulation of the transport and the localization of proteins to the cilium. Required for the localization to the cilium of V-ATPase subunit ATP6V1D and ATP6V0D1, and RAB8A. Involved in osteoclast differentiation and therefore bone resorption.</text>
</comment>
<comment type="subunit">
    <text evidence="5">Interacts with ATP6V1D; may play a role in ciliogenesis.</text>
</comment>
<comment type="interaction">
    <interactant intactId="EBI-10329478">
        <id>Q9Y5X0</id>
    </interactant>
    <interactant intactId="EBI-714543">
        <id>Q15041</id>
        <label>ARL6IP1</label>
    </interactant>
    <organismsDiffer>false</organismsDiffer>
    <experiments>6</experiments>
</comment>
<comment type="interaction">
    <interactant intactId="EBI-10329478">
        <id>Q9Y5X0</id>
    </interactant>
    <interactant intactId="EBI-399080">
        <id>Q92993</id>
        <label>KAT5</label>
    </interactant>
    <organismsDiffer>false</organismsDiffer>
    <experiments>3</experiments>
</comment>
<comment type="interaction">
    <interactant intactId="EBI-10329478">
        <id>Q9Y5X0</id>
    </interactant>
    <interactant intactId="EBI-11742507">
        <id>Q8TAP4-4</id>
        <label>LMO3</label>
    </interactant>
    <organismsDiffer>false</organismsDiffer>
    <experiments>3</experiments>
</comment>
<comment type="interaction">
    <interactant intactId="EBI-10329478">
        <id>Q9Y5X0</id>
    </interactant>
    <interactant intactId="EBI-1383528">
        <id>P17252</id>
        <label>PRKCA</label>
    </interactant>
    <organismsDiffer>false</organismsDiffer>
    <experiments>3</experiments>
</comment>
<comment type="interaction">
    <interactant intactId="EBI-10329478">
        <id>Q9Y5X0</id>
    </interactant>
    <interactant intactId="EBI-712367">
        <id>Q9UI14</id>
        <label>RABAC1</label>
    </interactant>
    <organismsDiffer>false</organismsDiffer>
    <experiments>3</experiments>
</comment>
<comment type="interaction">
    <interactant intactId="EBI-10329478">
        <id>Q9Y5X0</id>
    </interactant>
    <interactant intactId="EBI-9090795">
        <id>Q15047-2</id>
        <label>SETDB1</label>
    </interactant>
    <organismsDiffer>false</organismsDiffer>
    <experiments>3</experiments>
</comment>
<comment type="interaction">
    <interactant intactId="EBI-10329478">
        <id>Q9Y5X0</id>
    </interactant>
    <interactant intactId="EBI-2799703">
        <id>O95070</id>
        <label>YIF1A</label>
    </interactant>
    <organismsDiffer>false</organismsDiffer>
    <experiments>3</experiments>
</comment>
<comment type="interaction">
    <interactant intactId="EBI-10329478">
        <id>Q9Y5X0</id>
    </interactant>
    <interactant intactId="EBI-359832">
        <id>P61981</id>
        <label>YWHAG</label>
    </interactant>
    <organismsDiffer>false</organismsDiffer>
    <experiments>3</experiments>
</comment>
<comment type="subcellular location">
    <subcellularLocation>
        <location>Cytoplasm</location>
    </subcellularLocation>
    <subcellularLocation>
        <location>Endosome membrane</location>
        <topology>Peripheral membrane protein</topology>
        <orientation>Cytoplasmic side</orientation>
    </subcellularLocation>
    <subcellularLocation>
        <location>Cytoplasm</location>
        <location>Cytoskeleton</location>
        <location>Microtubule organizing center</location>
        <location>Centrosome</location>
    </subcellularLocation>
    <text>May also localize to nucleus and endoplasmic reticulum.</text>
</comment>
<comment type="alternative products">
    <event type="alternative splicing"/>
    <isoform>
        <id>Q9Y5X0-1</id>
        <name>1</name>
        <sequence type="displayed"/>
    </isoform>
    <isoform>
        <id>Q9Y5X0-2</id>
        <name>2</name>
        <sequence type="described" ref="VSP_045920"/>
    </isoform>
</comment>
<comment type="domain">
    <text>The PX domain mediates interaction with membranes enriched in phosphatidylinositol 3-phosphate.</text>
</comment>
<comment type="disease" evidence="6 7 8">
    <disease id="DI-03656">
        <name>Osteopetrosis, autosomal recessive 8</name>
        <acronym>OPTB8</acronym>
        <description>A rare genetic disease characterized by abnormally dense bone, due to defective resorption of immature bone. Osteopetrosis occurs in two forms: a severe autosomal recessive form occurring in utero, infancy, or childhood, and a benign autosomal dominant form occurring in adolescence or adulthood. Recessive osteopetrosis commonly manifests in early infancy with macrocephaly, feeding difficulties, evolving blindness and deafness, bone marrow failure, severe anemia, and hepatosplenomegaly. Deafness and blindness are generally thought to represent effects of pressure on nerves. OPTB8 is clinically characterized by dense bones with no distinction between outer and inner plates, due to extensive encroachment of cortical bone into the medullary space, increased head circumference, broad open fontanelle, frontal bossing, and hepatosplenomegaly. Osteoclasts number is low and their bone resorptive capacity is impaired.</description>
        <dbReference type="MIM" id="615085"/>
    </disease>
    <text>The disease is caused by variants affecting the gene represented in this entry.</text>
</comment>
<comment type="similarity">
    <text evidence="10">Belongs to the sorting nexin family.</text>
</comment>
<reference key="1">
    <citation type="journal article" date="2001" name="Biochem. J.">
        <title>A large family of endosome-localized proteins related to sorting nexin 1.</title>
        <authorList>
            <person name="Teasdale R.D."/>
            <person name="Loci D."/>
            <person name="Houghton F."/>
            <person name="Karlsson L."/>
            <person name="Gleeson P.A."/>
        </authorList>
    </citation>
    <scope>NUCLEOTIDE SEQUENCE [MRNA] (ISOFORM 1)</scope>
    <scope>SUBCELLULAR LOCATION</scope>
    <scope>VARIANT ILE-187</scope>
</reference>
<reference key="2">
    <citation type="journal article" date="2004" name="Nat. Genet.">
        <title>Complete sequencing and characterization of 21,243 full-length human cDNAs.</title>
        <authorList>
            <person name="Ota T."/>
            <person name="Suzuki Y."/>
            <person name="Nishikawa T."/>
            <person name="Otsuki T."/>
            <person name="Sugiyama T."/>
            <person name="Irie R."/>
            <person name="Wakamatsu A."/>
            <person name="Hayashi K."/>
            <person name="Sato H."/>
            <person name="Nagai K."/>
            <person name="Kimura K."/>
            <person name="Makita H."/>
            <person name="Sekine M."/>
            <person name="Obayashi M."/>
            <person name="Nishi T."/>
            <person name="Shibahara T."/>
            <person name="Tanaka T."/>
            <person name="Ishii S."/>
            <person name="Yamamoto J."/>
            <person name="Saito K."/>
            <person name="Kawai Y."/>
            <person name="Isono Y."/>
            <person name="Nakamura Y."/>
            <person name="Nagahari K."/>
            <person name="Murakami K."/>
            <person name="Yasuda T."/>
            <person name="Iwayanagi T."/>
            <person name="Wagatsuma M."/>
            <person name="Shiratori A."/>
            <person name="Sudo H."/>
            <person name="Hosoiri T."/>
            <person name="Kaku Y."/>
            <person name="Kodaira H."/>
            <person name="Kondo H."/>
            <person name="Sugawara M."/>
            <person name="Takahashi M."/>
            <person name="Kanda K."/>
            <person name="Yokoi T."/>
            <person name="Furuya T."/>
            <person name="Kikkawa E."/>
            <person name="Omura Y."/>
            <person name="Abe K."/>
            <person name="Kamihara K."/>
            <person name="Katsuta N."/>
            <person name="Sato K."/>
            <person name="Tanikawa M."/>
            <person name="Yamazaki M."/>
            <person name="Ninomiya K."/>
            <person name="Ishibashi T."/>
            <person name="Yamashita H."/>
            <person name="Murakawa K."/>
            <person name="Fujimori K."/>
            <person name="Tanai H."/>
            <person name="Kimata M."/>
            <person name="Watanabe M."/>
            <person name="Hiraoka S."/>
            <person name="Chiba Y."/>
            <person name="Ishida S."/>
            <person name="Ono Y."/>
            <person name="Takiguchi S."/>
            <person name="Watanabe S."/>
            <person name="Yosida M."/>
            <person name="Hotuta T."/>
            <person name="Kusano J."/>
            <person name="Kanehori K."/>
            <person name="Takahashi-Fujii A."/>
            <person name="Hara H."/>
            <person name="Tanase T.-O."/>
            <person name="Nomura Y."/>
            <person name="Togiya S."/>
            <person name="Komai F."/>
            <person name="Hara R."/>
            <person name="Takeuchi K."/>
            <person name="Arita M."/>
            <person name="Imose N."/>
            <person name="Musashino K."/>
            <person name="Yuuki H."/>
            <person name="Oshima A."/>
            <person name="Sasaki N."/>
            <person name="Aotsuka S."/>
            <person name="Yoshikawa Y."/>
            <person name="Matsunawa H."/>
            <person name="Ichihara T."/>
            <person name="Shiohata N."/>
            <person name="Sano S."/>
            <person name="Moriya S."/>
            <person name="Momiyama H."/>
            <person name="Satoh N."/>
            <person name="Takami S."/>
            <person name="Terashima Y."/>
            <person name="Suzuki O."/>
            <person name="Nakagawa S."/>
            <person name="Senoh A."/>
            <person name="Mizoguchi H."/>
            <person name="Goto Y."/>
            <person name="Shimizu F."/>
            <person name="Wakebe H."/>
            <person name="Hishigaki H."/>
            <person name="Watanabe T."/>
            <person name="Sugiyama A."/>
            <person name="Takemoto M."/>
            <person name="Kawakami B."/>
            <person name="Yamazaki M."/>
            <person name="Watanabe K."/>
            <person name="Kumagai A."/>
            <person name="Itakura S."/>
            <person name="Fukuzumi Y."/>
            <person name="Fujimori Y."/>
            <person name="Komiyama M."/>
            <person name="Tashiro H."/>
            <person name="Tanigami A."/>
            <person name="Fujiwara T."/>
            <person name="Ono T."/>
            <person name="Yamada K."/>
            <person name="Fujii Y."/>
            <person name="Ozaki K."/>
            <person name="Hirao M."/>
            <person name="Ohmori Y."/>
            <person name="Kawabata A."/>
            <person name="Hikiji T."/>
            <person name="Kobatake N."/>
            <person name="Inagaki H."/>
            <person name="Ikema Y."/>
            <person name="Okamoto S."/>
            <person name="Okitani R."/>
            <person name="Kawakami T."/>
            <person name="Noguchi S."/>
            <person name="Itoh T."/>
            <person name="Shigeta K."/>
            <person name="Senba T."/>
            <person name="Matsumura K."/>
            <person name="Nakajima Y."/>
            <person name="Mizuno T."/>
            <person name="Morinaga M."/>
            <person name="Sasaki M."/>
            <person name="Togashi T."/>
            <person name="Oyama M."/>
            <person name="Hata H."/>
            <person name="Watanabe M."/>
            <person name="Komatsu T."/>
            <person name="Mizushima-Sugano J."/>
            <person name="Satoh T."/>
            <person name="Shirai Y."/>
            <person name="Takahashi Y."/>
            <person name="Nakagawa K."/>
            <person name="Okumura K."/>
            <person name="Nagase T."/>
            <person name="Nomura N."/>
            <person name="Kikuchi H."/>
            <person name="Masuho Y."/>
            <person name="Yamashita R."/>
            <person name="Nakai K."/>
            <person name="Yada T."/>
            <person name="Nakamura Y."/>
            <person name="Ohara O."/>
            <person name="Isogai T."/>
            <person name="Sugano S."/>
        </authorList>
    </citation>
    <scope>NUCLEOTIDE SEQUENCE [LARGE SCALE MRNA] (ISOFORMS 1 AND 2)</scope>
    <source>
        <tissue>Kidney</tissue>
        <tissue>Thalamus</tissue>
    </source>
</reference>
<reference key="3">
    <citation type="journal article" date="2003" name="Nature">
        <title>The DNA sequence of human chromosome 7.</title>
        <authorList>
            <person name="Hillier L.W."/>
            <person name="Fulton R.S."/>
            <person name="Fulton L.A."/>
            <person name="Graves T.A."/>
            <person name="Pepin K.H."/>
            <person name="Wagner-McPherson C."/>
            <person name="Layman D."/>
            <person name="Maas J."/>
            <person name="Jaeger S."/>
            <person name="Walker R."/>
            <person name="Wylie K."/>
            <person name="Sekhon M."/>
            <person name="Becker M.C."/>
            <person name="O'Laughlin M.D."/>
            <person name="Schaller M.E."/>
            <person name="Fewell G.A."/>
            <person name="Delehaunty K.D."/>
            <person name="Miner T.L."/>
            <person name="Nash W.E."/>
            <person name="Cordes M."/>
            <person name="Du H."/>
            <person name="Sun H."/>
            <person name="Edwards J."/>
            <person name="Bradshaw-Cordum H."/>
            <person name="Ali J."/>
            <person name="Andrews S."/>
            <person name="Isak A."/>
            <person name="Vanbrunt A."/>
            <person name="Nguyen C."/>
            <person name="Du F."/>
            <person name="Lamar B."/>
            <person name="Courtney L."/>
            <person name="Kalicki J."/>
            <person name="Ozersky P."/>
            <person name="Bielicki L."/>
            <person name="Scott K."/>
            <person name="Holmes A."/>
            <person name="Harkins R."/>
            <person name="Harris A."/>
            <person name="Strong C.M."/>
            <person name="Hou S."/>
            <person name="Tomlinson C."/>
            <person name="Dauphin-Kohlberg S."/>
            <person name="Kozlowicz-Reilly A."/>
            <person name="Leonard S."/>
            <person name="Rohlfing T."/>
            <person name="Rock S.M."/>
            <person name="Tin-Wollam A.-M."/>
            <person name="Abbott A."/>
            <person name="Minx P."/>
            <person name="Maupin R."/>
            <person name="Strowmatt C."/>
            <person name="Latreille P."/>
            <person name="Miller N."/>
            <person name="Johnson D."/>
            <person name="Murray J."/>
            <person name="Woessner J.P."/>
            <person name="Wendl M.C."/>
            <person name="Yang S.-P."/>
            <person name="Schultz B.R."/>
            <person name="Wallis J.W."/>
            <person name="Spieth J."/>
            <person name="Bieri T.A."/>
            <person name="Nelson J.O."/>
            <person name="Berkowicz N."/>
            <person name="Wohldmann P.E."/>
            <person name="Cook L.L."/>
            <person name="Hickenbotham M.T."/>
            <person name="Eldred J."/>
            <person name="Williams D."/>
            <person name="Bedell J.A."/>
            <person name="Mardis E.R."/>
            <person name="Clifton S.W."/>
            <person name="Chissoe S.L."/>
            <person name="Marra M.A."/>
            <person name="Raymond C."/>
            <person name="Haugen E."/>
            <person name="Gillett W."/>
            <person name="Zhou Y."/>
            <person name="James R."/>
            <person name="Phelps K."/>
            <person name="Iadanoto S."/>
            <person name="Bubb K."/>
            <person name="Simms E."/>
            <person name="Levy R."/>
            <person name="Clendenning J."/>
            <person name="Kaul R."/>
            <person name="Kent W.J."/>
            <person name="Furey T.S."/>
            <person name="Baertsch R.A."/>
            <person name="Brent M.R."/>
            <person name="Keibler E."/>
            <person name="Flicek P."/>
            <person name="Bork P."/>
            <person name="Suyama M."/>
            <person name="Bailey J.A."/>
            <person name="Portnoy M.E."/>
            <person name="Torrents D."/>
            <person name="Chinwalla A.T."/>
            <person name="Gish W.R."/>
            <person name="Eddy S.R."/>
            <person name="McPherson J.D."/>
            <person name="Olson M.V."/>
            <person name="Eichler E.E."/>
            <person name="Green E.D."/>
            <person name="Waterston R.H."/>
            <person name="Wilson R.K."/>
        </authorList>
    </citation>
    <scope>NUCLEOTIDE SEQUENCE [LARGE SCALE GENOMIC DNA]</scope>
</reference>
<reference key="4">
    <citation type="journal article" date="2003" name="Science">
        <title>Human chromosome 7: DNA sequence and biology.</title>
        <authorList>
            <person name="Scherer S.W."/>
            <person name="Cheung J."/>
            <person name="MacDonald J.R."/>
            <person name="Osborne L.R."/>
            <person name="Nakabayashi K."/>
            <person name="Herbrick J.-A."/>
            <person name="Carson A.R."/>
            <person name="Parker-Katiraee L."/>
            <person name="Skaug J."/>
            <person name="Khaja R."/>
            <person name="Zhang J."/>
            <person name="Hudek A.K."/>
            <person name="Li M."/>
            <person name="Haddad M."/>
            <person name="Duggan G.E."/>
            <person name="Fernandez B.A."/>
            <person name="Kanematsu E."/>
            <person name="Gentles S."/>
            <person name="Christopoulos C.C."/>
            <person name="Choufani S."/>
            <person name="Kwasnicka D."/>
            <person name="Zheng X.H."/>
            <person name="Lai Z."/>
            <person name="Nusskern D.R."/>
            <person name="Zhang Q."/>
            <person name="Gu Z."/>
            <person name="Lu F."/>
            <person name="Zeesman S."/>
            <person name="Nowaczyk M.J."/>
            <person name="Teshima I."/>
            <person name="Chitayat D."/>
            <person name="Shuman C."/>
            <person name="Weksberg R."/>
            <person name="Zackai E.H."/>
            <person name="Grebe T.A."/>
            <person name="Cox S.R."/>
            <person name="Kirkpatrick S.J."/>
            <person name="Rahman N."/>
            <person name="Friedman J.M."/>
            <person name="Heng H.H.Q."/>
            <person name="Pelicci P.G."/>
            <person name="Lo-Coco F."/>
            <person name="Belloni E."/>
            <person name="Shaffer L.G."/>
            <person name="Pober B."/>
            <person name="Morton C.C."/>
            <person name="Gusella J.F."/>
            <person name="Bruns G.A.P."/>
            <person name="Korf B.R."/>
            <person name="Quade B.J."/>
            <person name="Ligon A.H."/>
            <person name="Ferguson H."/>
            <person name="Higgins A.W."/>
            <person name="Leach N.T."/>
            <person name="Herrick S.R."/>
            <person name="Lemyre E."/>
            <person name="Farra C.G."/>
            <person name="Kim H.-G."/>
            <person name="Summers A.M."/>
            <person name="Gripp K.W."/>
            <person name="Roberts W."/>
            <person name="Szatmari P."/>
            <person name="Winsor E.J.T."/>
            <person name="Grzeschik K.-H."/>
            <person name="Teebi A."/>
            <person name="Minassian B.A."/>
            <person name="Kere J."/>
            <person name="Armengol L."/>
            <person name="Pujana M.A."/>
            <person name="Estivill X."/>
            <person name="Wilson M.D."/>
            <person name="Koop B.F."/>
            <person name="Tosi S."/>
            <person name="Moore G.E."/>
            <person name="Boright A.P."/>
            <person name="Zlotorynski E."/>
            <person name="Kerem B."/>
            <person name="Kroisel P.M."/>
            <person name="Petek E."/>
            <person name="Oscier D.G."/>
            <person name="Mould S.J."/>
            <person name="Doehner H."/>
            <person name="Doehner K."/>
            <person name="Rommens J.M."/>
            <person name="Vincent J.B."/>
            <person name="Venter J.C."/>
            <person name="Li P.W."/>
            <person name="Mural R.J."/>
            <person name="Adams M.D."/>
            <person name="Tsui L.-C."/>
        </authorList>
    </citation>
    <scope>NUCLEOTIDE SEQUENCE [LARGE SCALE GENOMIC DNA]</scope>
</reference>
<reference key="5">
    <citation type="submission" date="2005-07" db="EMBL/GenBank/DDBJ databases">
        <authorList>
            <person name="Mural R.J."/>
            <person name="Istrail S."/>
            <person name="Sutton G.G."/>
            <person name="Florea L."/>
            <person name="Halpern A.L."/>
            <person name="Mobarry C.M."/>
            <person name="Lippert R."/>
            <person name="Walenz B."/>
            <person name="Shatkay H."/>
            <person name="Dew I."/>
            <person name="Miller J.R."/>
            <person name="Flanigan M.J."/>
            <person name="Edwards N.J."/>
            <person name="Bolanos R."/>
            <person name="Fasulo D."/>
            <person name="Halldorsson B.V."/>
            <person name="Hannenhalli S."/>
            <person name="Turner R."/>
            <person name="Yooseph S."/>
            <person name="Lu F."/>
            <person name="Nusskern D.R."/>
            <person name="Shue B.C."/>
            <person name="Zheng X.H."/>
            <person name="Zhong F."/>
            <person name="Delcher A.L."/>
            <person name="Huson D.H."/>
            <person name="Kravitz S.A."/>
            <person name="Mouchard L."/>
            <person name="Reinert K."/>
            <person name="Remington K.A."/>
            <person name="Clark A.G."/>
            <person name="Waterman M.S."/>
            <person name="Eichler E.E."/>
            <person name="Adams M.D."/>
            <person name="Hunkapiller M.W."/>
            <person name="Myers E.W."/>
            <person name="Venter J.C."/>
        </authorList>
    </citation>
    <scope>NUCLEOTIDE SEQUENCE [LARGE SCALE GENOMIC DNA]</scope>
</reference>
<reference key="6">
    <citation type="journal article" date="2004" name="Genome Res.">
        <title>The status, quality, and expansion of the NIH full-length cDNA project: the Mammalian Gene Collection (MGC).</title>
        <authorList>
            <consortium name="The MGC Project Team"/>
        </authorList>
    </citation>
    <scope>NUCLEOTIDE SEQUENCE [LARGE SCALE MRNA] (ISOFORM 1)</scope>
    <source>
        <tissue>Testis</tissue>
    </source>
</reference>
<reference key="7">
    <citation type="journal article" date="2006" name="J. Biol. Chem.">
        <title>Sorting nexin 10 induces giant vacuoles in mammalian cells.</title>
        <authorList>
            <person name="Qin B."/>
            <person name="He M."/>
            <person name="Chen X."/>
            <person name="Pei D."/>
        </authorList>
    </citation>
    <scope>FUNCTION</scope>
    <scope>SUBCELLULAR LOCATION</scope>
    <scope>MUTAGENESIS OF ARG-53; LYS-79 AND ARG-94</scope>
</reference>
<reference key="8">
    <citation type="journal article" date="2012" name="Cell Res.">
        <title>A SNX10/V-ATPase pathway regulates ciliogenesis in vitro and in vivo.</title>
        <authorList>
            <person name="Chen Y."/>
            <person name="Wu B."/>
            <person name="Xu L."/>
            <person name="Li H."/>
            <person name="Xia J."/>
            <person name="Yin W."/>
            <person name="Li Z."/>
            <person name="Shi D."/>
            <person name="Li S."/>
            <person name="Lin S."/>
            <person name="Shu X."/>
            <person name="Pei D."/>
        </authorList>
    </citation>
    <scope>FUNCTION IN CILIOGENESIS</scope>
    <scope>INTERACTION WITH ATP6V1D</scope>
    <scope>SUBCELLULAR LOCATION</scope>
</reference>
<reference key="9">
    <citation type="journal article" date="2012" name="J. Cell. Biochem.">
        <title>SNX10 is required for osteoclast formation and resorption activity.</title>
        <authorList>
            <person name="Zhu C.H."/>
            <person name="Morse L.R."/>
            <person name="Battaglino R.A."/>
        </authorList>
    </citation>
    <scope>SUBCELLULAR LOCATION</scope>
</reference>
<reference key="10">
    <citation type="journal article" date="2013" name="Eur. J. Med. Genet.">
        <title>Homozygous stop mutation in the SNX10 gene in a consanguineous Iraqi boy with osteopetrosis and corpus callosum hypoplasia.</title>
        <authorList>
            <person name="Megarbane A."/>
            <person name="Pangrazio A."/>
            <person name="Villa A."/>
            <person name="Chouery E."/>
            <person name="Maarawi J."/>
            <person name="Sabbagh S."/>
            <person name="Lefranc G."/>
            <person name="Sobacchi C."/>
        </authorList>
    </citation>
    <scope>INVOLVEMENT IN OPTB8</scope>
</reference>
<reference key="11">
    <citation type="journal article" date="2012" name="J. Med. Genet.">
        <title>An SNX10 mutation causes malignant osteopetrosis of infancy.</title>
        <authorList>
            <person name="Aker M."/>
            <person name="Rouvinski A."/>
            <person name="Hashavia S."/>
            <person name="Ta-Shma A."/>
            <person name="Shaag A."/>
            <person name="Zenvirt S."/>
            <person name="Israel S."/>
            <person name="Weintraub M."/>
            <person name="Taraboulos A."/>
            <person name="Bar-Shavit Z."/>
            <person name="Elpeleg O."/>
        </authorList>
    </citation>
    <scope>VARIANT OPTB8 GLN-51</scope>
    <scope>CHARACTERIZATION OF VARIANT OPTB8 GLN-51</scope>
    <scope>FUNCTION IN BONE RESORPTION</scope>
</reference>
<reference key="12">
    <citation type="journal article" date="2013" name="J. Bone Miner. Res.">
        <title>SNX10 mutations define a subgroup of human autosomal recessive osteopetrosis with variable clinical severity.</title>
        <authorList>
            <person name="Pangrazio A."/>
            <person name="Fasth A."/>
            <person name="Sbardellati A."/>
            <person name="Orchard P.J."/>
            <person name="Kasow K.A."/>
            <person name="Raza J."/>
            <person name="Albayrak C."/>
            <person name="Albayrak D."/>
            <person name="Vanakker O.M."/>
            <person name="De Moerloose B."/>
            <person name="Vellodi A."/>
            <person name="Notarangelo L.D."/>
            <person name="Schlack C."/>
            <person name="Strauss G."/>
            <person name="Kuehl J.S."/>
            <person name="Caldana E."/>
            <person name="Lo Iacono N."/>
            <person name="Susani L."/>
            <person name="Kornak U."/>
            <person name="Schulz A."/>
            <person name="Vezzoni P."/>
            <person name="Villa A."/>
            <person name="Sobacchi C."/>
        </authorList>
    </citation>
    <scope>VARIANTS OPTB8 LEU-16; SER-32 AND PRO-51</scope>
</reference>
<protein>
    <recommendedName>
        <fullName>Sorting nexin-10</fullName>
    </recommendedName>
</protein>
<name>SNX10_HUMAN</name>
<dbReference type="EMBL" id="AF121860">
    <property type="protein sequence ID" value="AAD27833.1"/>
    <property type="molecule type" value="mRNA"/>
</dbReference>
<dbReference type="EMBL" id="AK309162">
    <property type="status" value="NOT_ANNOTATED_CDS"/>
    <property type="molecule type" value="mRNA"/>
</dbReference>
<dbReference type="EMBL" id="AK312850">
    <property type="protein sequence ID" value="BAG35703.1"/>
    <property type="molecule type" value="mRNA"/>
</dbReference>
<dbReference type="EMBL" id="AC004540">
    <property type="status" value="NOT_ANNOTATED_CDS"/>
    <property type="molecule type" value="Genomic_DNA"/>
</dbReference>
<dbReference type="EMBL" id="AC010677">
    <property type="status" value="NOT_ANNOTATED_CDS"/>
    <property type="molecule type" value="Genomic_DNA"/>
</dbReference>
<dbReference type="EMBL" id="AC074295">
    <property type="status" value="NOT_ANNOTATED_CDS"/>
    <property type="molecule type" value="Genomic_DNA"/>
</dbReference>
<dbReference type="EMBL" id="CH236948">
    <property type="protein sequence ID" value="EAL24234.1"/>
    <property type="molecule type" value="Genomic_DNA"/>
</dbReference>
<dbReference type="EMBL" id="CH471073">
    <property type="protein sequence ID" value="EAW93849.1"/>
    <property type="molecule type" value="Genomic_DNA"/>
</dbReference>
<dbReference type="EMBL" id="BC034992">
    <property type="protein sequence ID" value="AAH34992.1"/>
    <property type="molecule type" value="mRNA"/>
</dbReference>
<dbReference type="CCDS" id="CCDS5399.1">
    <molecule id="Q9Y5X0-1"/>
</dbReference>
<dbReference type="CCDS" id="CCDS56470.1">
    <molecule id="Q9Y5X0-2"/>
</dbReference>
<dbReference type="RefSeq" id="NP_001186764.1">
    <molecule id="Q9Y5X0-1"/>
    <property type="nucleotide sequence ID" value="NM_001199835.1"/>
</dbReference>
<dbReference type="RefSeq" id="NP_001186766.1">
    <property type="nucleotide sequence ID" value="NM_001199837.1"/>
</dbReference>
<dbReference type="RefSeq" id="NP_001186767.1">
    <molecule id="Q9Y5X0-2"/>
    <property type="nucleotide sequence ID" value="NM_001199838.2"/>
</dbReference>
<dbReference type="RefSeq" id="NP_001305127.1">
    <property type="nucleotide sequence ID" value="NM_001318198.1"/>
</dbReference>
<dbReference type="RefSeq" id="NP_001305128.1">
    <molecule id="Q9Y5X0-1"/>
    <property type="nucleotide sequence ID" value="NM_001318199.3"/>
</dbReference>
<dbReference type="RefSeq" id="NP_037454.2">
    <molecule id="Q9Y5X0-1"/>
    <property type="nucleotide sequence ID" value="NM_013322.2"/>
</dbReference>
<dbReference type="RefSeq" id="XP_006715775.1">
    <molecule id="Q9Y5X0-1"/>
    <property type="nucleotide sequence ID" value="XM_006715712.3"/>
</dbReference>
<dbReference type="RefSeq" id="XP_054214001.1">
    <molecule id="Q9Y5X0-1"/>
    <property type="nucleotide sequence ID" value="XM_054358026.1"/>
</dbReference>
<dbReference type="PDB" id="4ON3">
    <property type="method" value="X-ray"/>
    <property type="resolution" value="2.60 A"/>
    <property type="chains" value="A/B=1-201"/>
</dbReference>
<dbReference type="PDB" id="4PZG">
    <property type="method" value="X-ray"/>
    <property type="resolution" value="2.80 A"/>
    <property type="chains" value="A/B=1-201"/>
</dbReference>
<dbReference type="PDB" id="6KOK">
    <property type="method" value="X-ray"/>
    <property type="resolution" value="2.00 A"/>
    <property type="chains" value="A/B=135-153"/>
</dbReference>
<dbReference type="PDBsum" id="4ON3"/>
<dbReference type="PDBsum" id="4PZG"/>
<dbReference type="PDBsum" id="6KOK"/>
<dbReference type="SMR" id="Q9Y5X0"/>
<dbReference type="BioGRID" id="118940">
    <property type="interactions" value="6"/>
</dbReference>
<dbReference type="FunCoup" id="Q9Y5X0">
    <property type="interactions" value="655"/>
</dbReference>
<dbReference type="IntAct" id="Q9Y5X0">
    <property type="interactions" value="8"/>
</dbReference>
<dbReference type="STRING" id="9606.ENSP00000395474"/>
<dbReference type="TCDB" id="3.A.34.1.1">
    <property type="family name" value="the sorting nexins of the escrt complexes (sn-escrt)"/>
</dbReference>
<dbReference type="iPTMnet" id="Q9Y5X0"/>
<dbReference type="PhosphoSitePlus" id="Q9Y5X0"/>
<dbReference type="BioMuta" id="SNX10"/>
<dbReference type="DMDM" id="205371824"/>
<dbReference type="jPOST" id="Q9Y5X0"/>
<dbReference type="MassIVE" id="Q9Y5X0"/>
<dbReference type="PaxDb" id="9606-ENSP00000395474"/>
<dbReference type="PeptideAtlas" id="Q9Y5X0"/>
<dbReference type="ProteomicsDB" id="20105"/>
<dbReference type="ProteomicsDB" id="86525">
    <molecule id="Q9Y5X0-1"/>
</dbReference>
<dbReference type="Pumba" id="Q9Y5X0"/>
<dbReference type="Antibodypedia" id="1917">
    <property type="antibodies" value="150 antibodies from 19 providers"/>
</dbReference>
<dbReference type="DNASU" id="29887"/>
<dbReference type="Ensembl" id="ENST00000338523.9">
    <molecule id="Q9Y5X0-1"/>
    <property type="protein sequence ID" value="ENSP00000343709.5"/>
    <property type="gene ID" value="ENSG00000086300.17"/>
</dbReference>
<dbReference type="Ensembl" id="ENST00000396376.5">
    <molecule id="Q9Y5X0-1"/>
    <property type="protein sequence ID" value="ENSP00000379661.1"/>
    <property type="gene ID" value="ENSG00000086300.17"/>
</dbReference>
<dbReference type="Ensembl" id="ENST00000409838.1">
    <molecule id="Q9Y5X0-2"/>
    <property type="protein sequence ID" value="ENSP00000386540.1"/>
    <property type="gene ID" value="ENSG00000086300.17"/>
</dbReference>
<dbReference type="Ensembl" id="ENST00000446848.6">
    <molecule id="Q9Y5X0-1"/>
    <property type="protein sequence ID" value="ENSP00000395474.3"/>
    <property type="gene ID" value="ENSG00000086300.17"/>
</dbReference>
<dbReference type="Ensembl" id="ENST00000698078.1">
    <molecule id="Q9Y5X0-1"/>
    <property type="protein sequence ID" value="ENSP00000513550.1"/>
    <property type="gene ID" value="ENSG00000086300.17"/>
</dbReference>
<dbReference type="Ensembl" id="ENST00000698079.1">
    <molecule id="Q9Y5X0-1"/>
    <property type="protein sequence ID" value="ENSP00000513551.1"/>
    <property type="gene ID" value="ENSG00000086300.17"/>
</dbReference>
<dbReference type="Ensembl" id="ENST00000698080.1">
    <molecule id="Q9Y5X0-1"/>
    <property type="protein sequence ID" value="ENSP00000513552.1"/>
    <property type="gene ID" value="ENSG00000086300.17"/>
</dbReference>
<dbReference type="Ensembl" id="ENST00000698088.1">
    <molecule id="Q9Y5X0-1"/>
    <property type="protein sequence ID" value="ENSP00000513558.1"/>
    <property type="gene ID" value="ENSG00000086300.17"/>
</dbReference>
<dbReference type="Ensembl" id="ENST00000698090.1">
    <molecule id="Q9Y5X0-1"/>
    <property type="protein sequence ID" value="ENSP00000513560.1"/>
    <property type="gene ID" value="ENSG00000086300.17"/>
</dbReference>
<dbReference type="GeneID" id="29887"/>
<dbReference type="KEGG" id="hsa:29887"/>
<dbReference type="MANE-Select" id="ENST00000338523.9">
    <property type="protein sequence ID" value="ENSP00000343709.5"/>
    <property type="RefSeq nucleotide sequence ID" value="NM_013322.3"/>
    <property type="RefSeq protein sequence ID" value="NP_037454.2"/>
</dbReference>
<dbReference type="UCSC" id="uc003sxx.4">
    <molecule id="Q9Y5X0-1"/>
    <property type="organism name" value="human"/>
</dbReference>
<dbReference type="AGR" id="HGNC:14974"/>
<dbReference type="CTD" id="29887"/>
<dbReference type="DisGeNET" id="29887"/>
<dbReference type="GeneCards" id="SNX10"/>
<dbReference type="HGNC" id="HGNC:14974">
    <property type="gene designation" value="SNX10"/>
</dbReference>
<dbReference type="HPA" id="ENSG00000086300">
    <property type="expression patterns" value="Tissue enhanced (brain, liver)"/>
</dbReference>
<dbReference type="MalaCards" id="SNX10"/>
<dbReference type="MIM" id="614780">
    <property type="type" value="gene"/>
</dbReference>
<dbReference type="MIM" id="615085">
    <property type="type" value="phenotype"/>
</dbReference>
<dbReference type="neXtProt" id="NX_Q9Y5X0"/>
<dbReference type="OpenTargets" id="ENSG00000086300"/>
<dbReference type="Orphanet" id="667">
    <property type="disease" value="Autosomal recessive malignant osteopetrosis"/>
</dbReference>
<dbReference type="PharmGKB" id="PA37950"/>
<dbReference type="VEuPathDB" id="HostDB:ENSG00000086300"/>
<dbReference type="eggNOG" id="KOG2527">
    <property type="taxonomic scope" value="Eukaryota"/>
</dbReference>
<dbReference type="GeneTree" id="ENSGT00940000156007"/>
<dbReference type="HOGENOM" id="CLU_057172_4_0_1"/>
<dbReference type="InParanoid" id="Q9Y5X0"/>
<dbReference type="OrthoDB" id="5227681at2759"/>
<dbReference type="PAN-GO" id="Q9Y5X0">
    <property type="GO annotations" value="4 GO annotations based on evolutionary models"/>
</dbReference>
<dbReference type="PhylomeDB" id="Q9Y5X0"/>
<dbReference type="TreeFam" id="TF332117"/>
<dbReference type="PathwayCommons" id="Q9Y5X0"/>
<dbReference type="SignaLink" id="Q9Y5X0"/>
<dbReference type="BioGRID-ORCS" id="29887">
    <property type="hits" value="14 hits in 1155 CRISPR screens"/>
</dbReference>
<dbReference type="EvolutionaryTrace" id="Q9Y5X0"/>
<dbReference type="GenomeRNAi" id="29887"/>
<dbReference type="Pharos" id="Q9Y5X0">
    <property type="development level" value="Tbio"/>
</dbReference>
<dbReference type="PRO" id="PR:Q9Y5X0"/>
<dbReference type="Proteomes" id="UP000005640">
    <property type="component" value="Chromosome 7"/>
</dbReference>
<dbReference type="RNAct" id="Q9Y5X0">
    <property type="molecule type" value="protein"/>
</dbReference>
<dbReference type="Bgee" id="ENSG00000086300">
    <property type="expression patterns" value="Expressed in lateral nuclear group of thalamus and 178 other cell types or tissues"/>
</dbReference>
<dbReference type="ExpressionAtlas" id="Q9Y5X0">
    <property type="expression patterns" value="baseline and differential"/>
</dbReference>
<dbReference type="GO" id="GO:0090651">
    <property type="term" value="C:apical cytoplasm"/>
    <property type="evidence" value="ECO:0007669"/>
    <property type="project" value="Ensembl"/>
</dbReference>
<dbReference type="GO" id="GO:0005813">
    <property type="term" value="C:centrosome"/>
    <property type="evidence" value="ECO:0007669"/>
    <property type="project" value="UniProtKB-SubCell"/>
</dbReference>
<dbReference type="GO" id="GO:0005783">
    <property type="term" value="C:endoplasmic reticulum"/>
    <property type="evidence" value="ECO:0000314"/>
    <property type="project" value="UniProtKB"/>
</dbReference>
<dbReference type="GO" id="GO:0005768">
    <property type="term" value="C:endosome"/>
    <property type="evidence" value="ECO:0000318"/>
    <property type="project" value="GO_Central"/>
</dbReference>
<dbReference type="GO" id="GO:0031313">
    <property type="term" value="C:extrinsic component of endosome membrane"/>
    <property type="evidence" value="ECO:0000314"/>
    <property type="project" value="UniProtKB"/>
</dbReference>
<dbReference type="GO" id="GO:0005634">
    <property type="term" value="C:nucleus"/>
    <property type="evidence" value="ECO:0000314"/>
    <property type="project" value="UniProtKB"/>
</dbReference>
<dbReference type="GO" id="GO:0030141">
    <property type="term" value="C:secretory granule"/>
    <property type="evidence" value="ECO:0007669"/>
    <property type="project" value="Ensembl"/>
</dbReference>
<dbReference type="GO" id="GO:0005545">
    <property type="term" value="F:1-phosphatidylinositol binding"/>
    <property type="evidence" value="ECO:0000315"/>
    <property type="project" value="UniProtKB"/>
</dbReference>
<dbReference type="GO" id="GO:0051117">
    <property type="term" value="F:ATPase binding"/>
    <property type="evidence" value="ECO:0000353"/>
    <property type="project" value="UniProtKB"/>
</dbReference>
<dbReference type="GO" id="GO:1901981">
    <property type="term" value="F:phosphatidylinositol phosphate binding"/>
    <property type="evidence" value="ECO:0000318"/>
    <property type="project" value="GO_Central"/>
</dbReference>
<dbReference type="GO" id="GO:0035630">
    <property type="term" value="P:bone mineralization involved in bone maturation"/>
    <property type="evidence" value="ECO:0007669"/>
    <property type="project" value="Ensembl"/>
</dbReference>
<dbReference type="GO" id="GO:0045453">
    <property type="term" value="P:bone resorption"/>
    <property type="evidence" value="ECO:0007669"/>
    <property type="project" value="Ensembl"/>
</dbReference>
<dbReference type="GO" id="GO:0055074">
    <property type="term" value="P:calcium ion homeostasis"/>
    <property type="evidence" value="ECO:0007669"/>
    <property type="project" value="Ensembl"/>
</dbReference>
<dbReference type="GO" id="GO:0019725">
    <property type="term" value="P:cellular homeostasis"/>
    <property type="evidence" value="ECO:0007669"/>
    <property type="project" value="Ensembl"/>
</dbReference>
<dbReference type="GO" id="GO:1990830">
    <property type="term" value="P:cellular response to leukemia inhibitory factor"/>
    <property type="evidence" value="ECO:0007669"/>
    <property type="project" value="Ensembl"/>
</dbReference>
<dbReference type="GO" id="GO:0060271">
    <property type="term" value="P:cilium assembly"/>
    <property type="evidence" value="ECO:0000315"/>
    <property type="project" value="UniProtKB"/>
</dbReference>
<dbReference type="GO" id="GO:0006897">
    <property type="term" value="P:endocytosis"/>
    <property type="evidence" value="ECO:0007669"/>
    <property type="project" value="Ensembl"/>
</dbReference>
<dbReference type="GO" id="GO:0007032">
    <property type="term" value="P:endosome organization"/>
    <property type="evidence" value="ECO:0000315"/>
    <property type="project" value="UniProtKB"/>
</dbReference>
<dbReference type="GO" id="GO:0001696">
    <property type="term" value="P:gastric acid secretion"/>
    <property type="evidence" value="ECO:0007669"/>
    <property type="project" value="Ensembl"/>
</dbReference>
<dbReference type="GO" id="GO:0006886">
    <property type="term" value="P:intracellular protein transport"/>
    <property type="evidence" value="ECO:0007669"/>
    <property type="project" value="InterPro"/>
</dbReference>
<dbReference type="GO" id="GO:0030316">
    <property type="term" value="P:osteoclast differentiation"/>
    <property type="evidence" value="ECO:0000250"/>
    <property type="project" value="UniProtKB"/>
</dbReference>
<dbReference type="GO" id="GO:0071539">
    <property type="term" value="P:protein localization to centrosome"/>
    <property type="evidence" value="ECO:0000315"/>
    <property type="project" value="UniProtKB"/>
</dbReference>
<dbReference type="GO" id="GO:0061512">
    <property type="term" value="P:protein localization to cilium"/>
    <property type="evidence" value="ECO:0000315"/>
    <property type="project" value="UniProtKB"/>
</dbReference>
<dbReference type="GO" id="GO:0097178">
    <property type="term" value="P:ruffle assembly"/>
    <property type="evidence" value="ECO:0007669"/>
    <property type="project" value="Ensembl"/>
</dbReference>
<dbReference type="GO" id="GO:0044691">
    <property type="term" value="P:tooth eruption"/>
    <property type="evidence" value="ECO:0007669"/>
    <property type="project" value="Ensembl"/>
</dbReference>
<dbReference type="GO" id="GO:0016050">
    <property type="term" value="P:vesicle organization"/>
    <property type="evidence" value="ECO:0000318"/>
    <property type="project" value="GO_Central"/>
</dbReference>
<dbReference type="CDD" id="cd06898">
    <property type="entry name" value="PX_SNX10"/>
    <property type="match status" value="1"/>
</dbReference>
<dbReference type="FunFam" id="3.30.1520.10:FF:000012">
    <property type="entry name" value="Sorting nexin 10"/>
    <property type="match status" value="1"/>
</dbReference>
<dbReference type="Gene3D" id="3.30.1520.10">
    <property type="entry name" value="Phox-like domain"/>
    <property type="match status" value="1"/>
</dbReference>
<dbReference type="InterPro" id="IPR001683">
    <property type="entry name" value="PX_dom"/>
</dbReference>
<dbReference type="InterPro" id="IPR036871">
    <property type="entry name" value="PX_dom_sf"/>
</dbReference>
<dbReference type="InterPro" id="IPR043544">
    <property type="entry name" value="SNX10/11"/>
</dbReference>
<dbReference type="PANTHER" id="PTHR46209">
    <property type="entry name" value="PX DOMAIN-CONTAINING PROTEIN"/>
    <property type="match status" value="1"/>
</dbReference>
<dbReference type="PANTHER" id="PTHR46209:SF2">
    <property type="entry name" value="SORTING NEXIN-10"/>
    <property type="match status" value="1"/>
</dbReference>
<dbReference type="Pfam" id="PF00787">
    <property type="entry name" value="PX"/>
    <property type="match status" value="1"/>
</dbReference>
<dbReference type="SMART" id="SM00312">
    <property type="entry name" value="PX"/>
    <property type="match status" value="1"/>
</dbReference>
<dbReference type="SUPFAM" id="SSF64268">
    <property type="entry name" value="PX domain"/>
    <property type="match status" value="1"/>
</dbReference>
<dbReference type="PROSITE" id="PS50195">
    <property type="entry name" value="PX"/>
    <property type="match status" value="1"/>
</dbReference>
<gene>
    <name type="primary">SNX10</name>
</gene>
<accession>Q9Y5X0</accession>
<accession>E9PFH5</accession>
<accession>Q8IYT5</accession>
<sequence length="201" mass="23598">MFPEQQKEEFVSVWVRDPRIQKEDFWHSYIDYEICIHTNSMCFTMKTSCVRRRYREFVWLRQRLQSNALLVQLPELPSKNLFFNMNNRQHVDQRRQGLEDFLRKVLQNALLLSDSSLHLFLQSHLNSEDIEACVSGQTKYSVEEAIHKFALMNRRFPEEDEEGKKENDIDYDSESSSSGLGHSSDDSSSHGCKVNTAPQES</sequence>
<keyword id="KW-0002">3D-structure</keyword>
<keyword id="KW-0025">Alternative splicing</keyword>
<keyword id="KW-0970">Cilium biogenesis/degradation</keyword>
<keyword id="KW-0963">Cytoplasm</keyword>
<keyword id="KW-0206">Cytoskeleton</keyword>
<keyword id="KW-0225">Disease variant</keyword>
<keyword id="KW-0967">Endosome</keyword>
<keyword id="KW-0446">Lipid-binding</keyword>
<keyword id="KW-0472">Membrane</keyword>
<keyword id="KW-0987">Osteopetrosis</keyword>
<keyword id="KW-0653">Protein transport</keyword>
<keyword id="KW-1267">Proteomics identification</keyword>
<keyword id="KW-1185">Reference proteome</keyword>
<keyword id="KW-0813">Transport</keyword>